<name>CYC7_YEAST</name>
<protein>
    <recommendedName>
        <fullName>Cytochrome c isoform 2</fullName>
        <shortName>Iso-2-cytochrome c</shortName>
    </recommendedName>
    <alternativeName>
        <fullName>Cytochrome c hypoxic isoform</fullName>
    </alternativeName>
</protein>
<dbReference type="EMBL" id="S65964">
    <property type="protein sequence ID" value="AAD13974.1"/>
    <property type="molecule type" value="Genomic_DNA"/>
</dbReference>
<dbReference type="EMBL" id="V01299">
    <property type="protein sequence ID" value="CAA24606.1"/>
    <property type="molecule type" value="Genomic_DNA"/>
</dbReference>
<dbReference type="EMBL" id="L22173">
    <property type="protein sequence ID" value="AAA34940.1"/>
    <property type="molecule type" value="Genomic_DNA"/>
</dbReference>
<dbReference type="EMBL" id="J01320">
    <property type="protein sequence ID" value="AAB59339.1"/>
    <property type="molecule type" value="Genomic_DNA"/>
</dbReference>
<dbReference type="EMBL" id="U18779">
    <property type="protein sequence ID" value="AAB65003.1"/>
    <property type="molecule type" value="Genomic_DNA"/>
</dbReference>
<dbReference type="EMBL" id="AY693032">
    <property type="protein sequence ID" value="AAT93051.1"/>
    <property type="molecule type" value="Genomic_DNA"/>
</dbReference>
<dbReference type="EMBL" id="BK006939">
    <property type="protein sequence ID" value="DAA07614.1"/>
    <property type="molecule type" value="Genomic_DNA"/>
</dbReference>
<dbReference type="PIR" id="A00038">
    <property type="entry name" value="CCBYBC"/>
</dbReference>
<dbReference type="RefSeq" id="NP_010875.1">
    <property type="nucleotide sequence ID" value="NM_001178854.1"/>
</dbReference>
<dbReference type="PDB" id="1YEA">
    <property type="method" value="X-ray"/>
    <property type="resolution" value="1.90 A"/>
    <property type="chains" value="A=2-113"/>
</dbReference>
<dbReference type="PDB" id="1YEB">
    <property type="method" value="X-ray"/>
    <property type="resolution" value="1.95 A"/>
    <property type="chains" value="A=6-111"/>
</dbReference>
<dbReference type="PDB" id="1YTC">
    <property type="method" value="X-ray"/>
    <property type="resolution" value="1.80 A"/>
    <property type="chains" value="A=2-113"/>
</dbReference>
<dbReference type="PDB" id="3CXH">
    <property type="method" value="X-ray"/>
    <property type="resolution" value="2.50 A"/>
    <property type="chains" value="W=2-113"/>
</dbReference>
<dbReference type="PDBsum" id="1YEA"/>
<dbReference type="PDBsum" id="1YEB"/>
<dbReference type="PDBsum" id="1YTC"/>
<dbReference type="PDBsum" id="3CXH"/>
<dbReference type="BMRB" id="P00045"/>
<dbReference type="SMR" id="P00045"/>
<dbReference type="BioGRID" id="36690">
    <property type="interactions" value="28"/>
</dbReference>
<dbReference type="DIP" id="DIP-7178N"/>
<dbReference type="FunCoup" id="P00045">
    <property type="interactions" value="653"/>
</dbReference>
<dbReference type="IntAct" id="P00045">
    <property type="interactions" value="2"/>
</dbReference>
<dbReference type="MINT" id="P00045"/>
<dbReference type="STRING" id="4932.YEL039C"/>
<dbReference type="iPTMnet" id="P00045"/>
<dbReference type="PaxDb" id="4932-YEL039C"/>
<dbReference type="PeptideAtlas" id="P00045"/>
<dbReference type="EnsemblFungi" id="YEL039C_mRNA">
    <property type="protein sequence ID" value="YEL039C"/>
    <property type="gene ID" value="YEL039C"/>
</dbReference>
<dbReference type="GeneID" id="856672"/>
<dbReference type="KEGG" id="sce:YEL039C"/>
<dbReference type="AGR" id="SGD:S000000765"/>
<dbReference type="SGD" id="S000000765">
    <property type="gene designation" value="CYC7"/>
</dbReference>
<dbReference type="VEuPathDB" id="FungiDB:YEL039C"/>
<dbReference type="eggNOG" id="KOG3453">
    <property type="taxonomic scope" value="Eukaryota"/>
</dbReference>
<dbReference type="GeneTree" id="ENSGT00940000168884"/>
<dbReference type="HOGENOM" id="CLU_060944_3_0_1"/>
<dbReference type="InParanoid" id="P00045"/>
<dbReference type="OMA" id="MPAPYKK"/>
<dbReference type="OrthoDB" id="449280at2759"/>
<dbReference type="BioCyc" id="YEAST:G3O-30160-MONOMER"/>
<dbReference type="Reactome" id="R-SCE-111457">
    <property type="pathway name" value="Release of apoptotic factors from the mitochondria"/>
</dbReference>
<dbReference type="Reactome" id="R-SCE-3299685">
    <property type="pathway name" value="Detoxification of Reactive Oxygen Species"/>
</dbReference>
<dbReference type="Reactome" id="R-SCE-5620971">
    <property type="pathway name" value="Pyroptosis"/>
</dbReference>
<dbReference type="Reactome" id="R-SCE-611105">
    <property type="pathway name" value="Respiratory electron transport"/>
</dbReference>
<dbReference type="BioGRID-ORCS" id="856672">
    <property type="hits" value="0 hits in 10 CRISPR screens"/>
</dbReference>
<dbReference type="EvolutionaryTrace" id="P00045"/>
<dbReference type="PRO" id="PR:P00045"/>
<dbReference type="Proteomes" id="UP000002311">
    <property type="component" value="Chromosome V"/>
</dbReference>
<dbReference type="RNAct" id="P00045">
    <property type="molecule type" value="protein"/>
</dbReference>
<dbReference type="GO" id="GO:0005758">
    <property type="term" value="C:mitochondrial intermembrane space"/>
    <property type="evidence" value="ECO:0000314"/>
    <property type="project" value="SGD"/>
</dbReference>
<dbReference type="GO" id="GO:0005739">
    <property type="term" value="C:mitochondrion"/>
    <property type="evidence" value="ECO:0007005"/>
    <property type="project" value="SGD"/>
</dbReference>
<dbReference type="GO" id="GO:0009055">
    <property type="term" value="F:electron transfer activity"/>
    <property type="evidence" value="ECO:0000314"/>
    <property type="project" value="SGD"/>
</dbReference>
<dbReference type="GO" id="GO:0020037">
    <property type="term" value="F:heme binding"/>
    <property type="evidence" value="ECO:0007669"/>
    <property type="project" value="InterPro"/>
</dbReference>
<dbReference type="GO" id="GO:0046872">
    <property type="term" value="F:metal ion binding"/>
    <property type="evidence" value="ECO:0007669"/>
    <property type="project" value="UniProtKB-KW"/>
</dbReference>
<dbReference type="GO" id="GO:0006123">
    <property type="term" value="P:mitochondrial electron transport, cytochrome c to oxygen"/>
    <property type="evidence" value="ECO:0000314"/>
    <property type="project" value="SGD"/>
</dbReference>
<dbReference type="GO" id="GO:0006122">
    <property type="term" value="P:mitochondrial electron transport, ubiquinol to cytochrome c"/>
    <property type="evidence" value="ECO:0000314"/>
    <property type="project" value="SGD"/>
</dbReference>
<dbReference type="FunFam" id="1.10.760.10:FF:000001">
    <property type="entry name" value="Cytochrome c iso-1"/>
    <property type="match status" value="1"/>
</dbReference>
<dbReference type="Gene3D" id="1.10.760.10">
    <property type="entry name" value="Cytochrome c-like domain"/>
    <property type="match status" value="1"/>
</dbReference>
<dbReference type="InterPro" id="IPR009056">
    <property type="entry name" value="Cyt_c-like_dom"/>
</dbReference>
<dbReference type="InterPro" id="IPR036909">
    <property type="entry name" value="Cyt_c-like_dom_sf"/>
</dbReference>
<dbReference type="InterPro" id="IPR002327">
    <property type="entry name" value="Cyt_c_1A/1B"/>
</dbReference>
<dbReference type="PANTHER" id="PTHR11961">
    <property type="entry name" value="CYTOCHROME C"/>
    <property type="match status" value="1"/>
</dbReference>
<dbReference type="Pfam" id="PF00034">
    <property type="entry name" value="Cytochrom_C"/>
    <property type="match status" value="1"/>
</dbReference>
<dbReference type="PRINTS" id="PR00604">
    <property type="entry name" value="CYTCHRMECIAB"/>
</dbReference>
<dbReference type="SUPFAM" id="SSF46626">
    <property type="entry name" value="Cytochrome c"/>
    <property type="match status" value="1"/>
</dbReference>
<dbReference type="PROSITE" id="PS51007">
    <property type="entry name" value="CYTC"/>
    <property type="match status" value="1"/>
</dbReference>
<sequence length="113" mass="12532">MAKESTGFKPGSAKKGATLFKTRCQQCHTIEEGGPNKVGPNLHGIFGRHSGQVKGYSYTDANINKNVKWDEDSMSEYLTNPKKYIPGTKMAFAGLKKEKDRNDLITYMTKAAK</sequence>
<reference key="1">
    <citation type="journal article" date="1980" name="Proc. Natl. Acad. Sci. U.S.A.">
        <title>Isolation and sequence of the gene for iso-2-cytochrome c in Saccharomyces cerevisiae.</title>
        <authorList>
            <person name="Montgomery D.L."/>
            <person name="Leung D.W."/>
            <person name="Smith M."/>
            <person name="Shalit P."/>
            <person name="Faye G."/>
            <person name="Hall B.D."/>
        </authorList>
    </citation>
    <scope>NUCLEOTIDE SEQUENCE [GENOMIC DNA]</scope>
</reference>
<reference key="2">
    <citation type="journal article" date="1993" name="J. Mol. Biol.">
        <title>The gene clusters ARC and COR on chromosomes 5 and 10, respectively, of Saccharomyces cerevisiae share a common ancestry.</title>
        <authorList>
            <person name="Melnick L."/>
            <person name="Sherman F."/>
        </authorList>
    </citation>
    <scope>NUCLEOTIDE SEQUENCE [GENOMIC DNA]</scope>
    <source>
        <strain>B-6441</strain>
    </source>
</reference>
<reference key="3">
    <citation type="journal article" date="1997" name="Nature">
        <title>The nucleotide sequence of Saccharomyces cerevisiae chromosome V.</title>
        <authorList>
            <person name="Dietrich F.S."/>
            <person name="Mulligan J.T."/>
            <person name="Hennessy K.M."/>
            <person name="Yelton M.A."/>
            <person name="Allen E."/>
            <person name="Araujo R."/>
            <person name="Aviles E."/>
            <person name="Berno A."/>
            <person name="Brennan T."/>
            <person name="Carpenter J."/>
            <person name="Chen E."/>
            <person name="Cherry J.M."/>
            <person name="Chung E."/>
            <person name="Duncan M."/>
            <person name="Guzman E."/>
            <person name="Hartzell G."/>
            <person name="Hunicke-Smith S."/>
            <person name="Hyman R.W."/>
            <person name="Kayser A."/>
            <person name="Komp C."/>
            <person name="Lashkari D."/>
            <person name="Lew H."/>
            <person name="Lin D."/>
            <person name="Mosedale D."/>
            <person name="Nakahara K."/>
            <person name="Namath A."/>
            <person name="Norgren R."/>
            <person name="Oefner P."/>
            <person name="Oh C."/>
            <person name="Petel F.X."/>
            <person name="Roberts D."/>
            <person name="Sehl P."/>
            <person name="Schramm S."/>
            <person name="Shogren T."/>
            <person name="Smith V."/>
            <person name="Taylor P."/>
            <person name="Wei Y."/>
            <person name="Botstein D."/>
            <person name="Davis R.W."/>
        </authorList>
    </citation>
    <scope>NUCLEOTIDE SEQUENCE [LARGE SCALE GENOMIC DNA]</scope>
    <source>
        <strain>ATCC 204508 / S288c</strain>
    </source>
</reference>
<reference key="4">
    <citation type="journal article" date="2014" name="G3 (Bethesda)">
        <title>The reference genome sequence of Saccharomyces cerevisiae: Then and now.</title>
        <authorList>
            <person name="Engel S.R."/>
            <person name="Dietrich F.S."/>
            <person name="Fisk D.G."/>
            <person name="Binkley G."/>
            <person name="Balakrishnan R."/>
            <person name="Costanzo M.C."/>
            <person name="Dwight S.S."/>
            <person name="Hitz B.C."/>
            <person name="Karra K."/>
            <person name="Nash R.S."/>
            <person name="Weng S."/>
            <person name="Wong E.D."/>
            <person name="Lloyd P."/>
            <person name="Skrzypek M.S."/>
            <person name="Miyasato S.R."/>
            <person name="Simison M."/>
            <person name="Cherry J.M."/>
        </authorList>
    </citation>
    <scope>GENOME REANNOTATION</scope>
    <source>
        <strain>ATCC 204508 / S288c</strain>
    </source>
</reference>
<reference key="5">
    <citation type="journal article" date="2007" name="Genome Res.">
        <title>Approaching a complete repository of sequence-verified protein-encoding clones for Saccharomyces cerevisiae.</title>
        <authorList>
            <person name="Hu Y."/>
            <person name="Rolfs A."/>
            <person name="Bhullar B."/>
            <person name="Murthy T.V.S."/>
            <person name="Zhu C."/>
            <person name="Berger M.F."/>
            <person name="Camargo A.A."/>
            <person name="Kelley F."/>
            <person name="McCarron S."/>
            <person name="Jepson D."/>
            <person name="Richardson A."/>
            <person name="Raphael J."/>
            <person name="Moreira D."/>
            <person name="Taycher E."/>
            <person name="Zuo D."/>
            <person name="Mohr S."/>
            <person name="Kane M.F."/>
            <person name="Williamson J."/>
            <person name="Simpson A.J.G."/>
            <person name="Bulyk M.L."/>
            <person name="Harlow E."/>
            <person name="Marsischky G."/>
            <person name="Kolodner R.D."/>
            <person name="LaBaer J."/>
        </authorList>
    </citation>
    <scope>NUCLEOTIDE SEQUENCE [GENOMIC DNA]</scope>
    <source>
        <strain>ATCC 204508 / S288c</strain>
    </source>
</reference>
<reference key="6">
    <citation type="journal article" date="1995" name="J. Biol. Chem.">
        <title>Isoforms of yeast cytochrome c oxidase subunit V affect the binuclear reaction center and alter the kinetics of interaction with the isoforms of yeast cytochrome c.</title>
        <authorList>
            <person name="Allen L.A."/>
            <person name="Zhao X.J."/>
            <person name="Caughey W."/>
            <person name="Poyton R.O."/>
        </authorList>
    </citation>
    <scope>FUNCTION</scope>
</reference>
<reference key="7">
    <citation type="journal article" date="1996" name="J. Biol. Chem.">
        <title>Sequence requirements for mitochondrial import of yeast cytochrome c.</title>
        <authorList>
            <person name="Wang X."/>
            <person name="Dumont M.E."/>
            <person name="Sherman F."/>
        </authorList>
    </citation>
    <scope>SUBCELLULAR LOCATION</scope>
</reference>
<reference key="8">
    <citation type="journal article" date="1997" name="J. Biol. Chem.">
        <title>Effects of oxygen concentration on the expression of cytochrome c and cytochrome c oxidase genes in yeast.</title>
        <authorList>
            <person name="Burke P.V."/>
            <person name="Raitt D.C."/>
            <person name="Allen L.A."/>
            <person name="Kellogg E.A."/>
            <person name="Poyton R.O."/>
        </authorList>
    </citation>
    <scope>INDUCTION</scope>
</reference>
<reference key="9">
    <citation type="journal article" date="2003" name="Nature">
        <title>Global analysis of protein expression in yeast.</title>
        <authorList>
            <person name="Ghaemmaghami S."/>
            <person name="Huh W.-K."/>
            <person name="Bower K."/>
            <person name="Howson R.W."/>
            <person name="Belle A."/>
            <person name="Dephoure N."/>
            <person name="O'Shea E.K."/>
            <person name="Weissman J.S."/>
        </authorList>
    </citation>
    <scope>LEVEL OF PROTEIN EXPRESSION [LARGE SCALE ANALYSIS]</scope>
</reference>
<reference key="10">
    <citation type="journal article" date="2012" name="Mol. Cell. Proteomics">
        <title>Intermembrane space proteome of yeast mitochondria.</title>
        <authorList>
            <person name="Voegtle F.N."/>
            <person name="Burkhart J.M."/>
            <person name="Rao S."/>
            <person name="Gerbeth C."/>
            <person name="Hinrichs J."/>
            <person name="Martinou J.C."/>
            <person name="Chacinska A."/>
            <person name="Sickmann A."/>
            <person name="Zahedi R.P."/>
            <person name="Meisinger C."/>
        </authorList>
    </citation>
    <scope>IDENTIFICATION BY MASS SPECTROMETRY</scope>
    <scope>SUBCELLULAR LOCATION [LARGE SCALE ANALYSIS]</scope>
</reference>
<reference key="11">
    <citation type="journal article" date="1992" name="J. Mol. Biol.">
        <title>Structure determination and analysis of yeast iso-2-cytochrome c and a composite mutant protein.</title>
        <authorList>
            <person name="Murphy M.E.P."/>
            <person name="Nall B.T."/>
            <person name="Brayer G.D."/>
        </authorList>
    </citation>
    <scope>X-RAY CRYSTALLOGRAPHY (1.9 ANGSTROMS) IN COMPLEX WITH HEME</scope>
</reference>
<reference key="12">
    <citation type="journal article" date="2008" name="J. Biol. Chem.">
        <title>Structure of complex III with bound cytochrome c in reduced state and definition of a minimal core interface for electron transfer.</title>
        <authorList>
            <person name="Solmaz S.R."/>
            <person name="Hunte C."/>
        </authorList>
    </citation>
    <scope>X-RAY CRYSTALLOGRAPHY (2.50 ANGSTROMS) IN COMPLEX WITH HEME</scope>
</reference>
<comment type="function">
    <text evidence="5 7">Electron carrier protein. The oxidized form of the cytochrome c heme group can accept an electron from the heme group of the cytochrome c1 subunit of ubiquinol-cytochrome c oxidoreductase. Cytochrome c then transfers this electron to the dinuclear copper A center (CU(A)) of the COX2 subunit of cytochrome oxidase, the final protein carrier in the mitochondrial electron-transport chain. Isoform 2 (CYC7) is the predominant cytochrome c under anaerobic/hypoxic conditions.</text>
</comment>
<comment type="cofactor">
    <cofactor evidence="3">
        <name>heme c</name>
        <dbReference type="ChEBI" id="CHEBI:61717"/>
    </cofactor>
    <text evidence="3">Binds 1 heme c group covalently per subunit.</text>
</comment>
<comment type="subcellular location">
    <subcellularLocation>
        <location evidence="4 6">Mitochondrion intermembrane space</location>
    </subcellularLocation>
</comment>
<comment type="induction">
    <text evidence="7">By low oxygen levels (hypoxia) at the level of transcription. Not expressed until the oxygen concentration is below 0.5 uM O(2).</text>
</comment>
<comment type="miscellaneous">
    <text evidence="2">Present with 1310 molecules/cell in log phase SD medium.</text>
</comment>
<comment type="similarity">
    <text evidence="8">Belongs to the cytochrome c family.</text>
</comment>
<comment type="online information" name="Protein Spotlight">
    <link uri="https://www.proteinspotlight.org/back_issues/076"/>
    <text>Life shuttle - Issue 76 of November 2006</text>
</comment>
<organism>
    <name type="scientific">Saccharomyces cerevisiae (strain ATCC 204508 / S288c)</name>
    <name type="common">Baker's yeast</name>
    <dbReference type="NCBI Taxonomy" id="559292"/>
    <lineage>
        <taxon>Eukaryota</taxon>
        <taxon>Fungi</taxon>
        <taxon>Dikarya</taxon>
        <taxon>Ascomycota</taxon>
        <taxon>Saccharomycotina</taxon>
        <taxon>Saccharomycetes</taxon>
        <taxon>Saccharomycetales</taxon>
        <taxon>Saccharomycetaceae</taxon>
        <taxon>Saccharomyces</taxon>
    </lineage>
</organism>
<evidence type="ECO:0000269" key="1">
    <source>
    </source>
</evidence>
<evidence type="ECO:0000269" key="2">
    <source>
    </source>
</evidence>
<evidence type="ECO:0000269" key="3">
    <source>
    </source>
</evidence>
<evidence type="ECO:0000269" key="4">
    <source>
    </source>
</evidence>
<evidence type="ECO:0000269" key="5">
    <source>
    </source>
</evidence>
<evidence type="ECO:0000269" key="6">
    <source>
    </source>
</evidence>
<evidence type="ECO:0000269" key="7">
    <source>
    </source>
</evidence>
<evidence type="ECO:0000305" key="8"/>
<evidence type="ECO:0007744" key="9">
    <source>
        <dbReference type="PDB" id="1YEA"/>
    </source>
</evidence>
<evidence type="ECO:0007744" key="10">
    <source>
        <dbReference type="PDB" id="1YEB"/>
    </source>
</evidence>
<evidence type="ECO:0007744" key="11">
    <source>
        <dbReference type="PDB" id="3CXH"/>
    </source>
</evidence>
<evidence type="ECO:0007829" key="12">
    <source>
        <dbReference type="PDB" id="1YEA"/>
    </source>
</evidence>
<evidence type="ECO:0007829" key="13">
    <source>
        <dbReference type="PDB" id="1YTC"/>
    </source>
</evidence>
<feature type="chain" id="PRO_0000108338" description="Cytochrome c isoform 2">
    <location>
        <begin position="1"/>
        <end position="113"/>
    </location>
</feature>
<feature type="binding site" description="covalent" evidence="1 3 9 10 11">
    <location>
        <position position="24"/>
    </location>
    <ligand>
        <name>heme c</name>
        <dbReference type="ChEBI" id="CHEBI:61717"/>
        <label>1</label>
    </ligand>
</feature>
<feature type="binding site" description="covalent" evidence="1 3 9 10 11">
    <location>
        <position position="27"/>
    </location>
    <ligand>
        <name>heme c</name>
        <dbReference type="ChEBI" id="CHEBI:61717"/>
        <label>1</label>
    </ligand>
</feature>
<feature type="binding site" description="axial binding residue" evidence="1 3 9 10 11">
    <location>
        <position position="28"/>
    </location>
    <ligand>
        <name>heme c</name>
        <dbReference type="ChEBI" id="CHEBI:61717"/>
    </ligand>
    <ligandPart>
        <name>Fe</name>
        <dbReference type="ChEBI" id="CHEBI:18248"/>
    </ligandPart>
</feature>
<feature type="binding site" description="axial binding residue" evidence="1 3 9 10">
    <location>
        <position position="90"/>
    </location>
    <ligand>
        <name>heme c</name>
        <dbReference type="ChEBI" id="CHEBI:61717"/>
    </ligand>
    <ligandPart>
        <name>Fe</name>
        <dbReference type="ChEBI" id="CHEBI:18248"/>
    </ligandPart>
</feature>
<feature type="strand" evidence="13">
    <location>
        <begin position="4"/>
        <end position="7"/>
    </location>
</feature>
<feature type="helix" evidence="13">
    <location>
        <begin position="13"/>
        <end position="23"/>
    </location>
</feature>
<feature type="turn" evidence="13">
    <location>
        <begin position="24"/>
        <end position="27"/>
    </location>
</feature>
<feature type="helix" evidence="13">
    <location>
        <begin position="45"/>
        <end position="47"/>
    </location>
</feature>
<feature type="strand" evidence="12">
    <location>
        <begin position="48"/>
        <end position="51"/>
    </location>
</feature>
<feature type="helix" evidence="13">
    <location>
        <begin position="60"/>
        <end position="65"/>
    </location>
</feature>
<feature type="helix" evidence="13">
    <location>
        <begin position="71"/>
        <end position="79"/>
    </location>
</feature>
<feature type="helix" evidence="13">
    <location>
        <begin position="81"/>
        <end position="84"/>
    </location>
</feature>
<feature type="helix" evidence="13">
    <location>
        <begin position="98"/>
        <end position="111"/>
    </location>
</feature>
<keyword id="KW-0002">3D-structure</keyword>
<keyword id="KW-0249">Electron transport</keyword>
<keyword id="KW-0349">Heme</keyword>
<keyword id="KW-0408">Iron</keyword>
<keyword id="KW-0479">Metal-binding</keyword>
<keyword id="KW-0496">Mitochondrion</keyword>
<keyword id="KW-1185">Reference proteome</keyword>
<keyword id="KW-0679">Respiratory chain</keyword>
<keyword id="KW-0813">Transport</keyword>
<proteinExistence type="evidence at protein level"/>
<gene>
    <name type="primary">CYC7</name>
    <name type="synonym">CYP3</name>
    <name type="ordered locus">YEL039C</name>
</gene>
<accession>P00045</accession>
<accession>D3DLL0</accession>